<gene>
    <name evidence="1" type="primary">secF</name>
    <name type="ordered locus">RT0022</name>
</gene>
<proteinExistence type="inferred from homology"/>
<feature type="chain" id="PRO_0000272640" description="Protein translocase subunit SecF">
    <location>
        <begin position="1"/>
        <end position="308"/>
    </location>
</feature>
<feature type="transmembrane region" description="Helical" evidence="1">
    <location>
        <begin position="23"/>
        <end position="42"/>
    </location>
</feature>
<feature type="transmembrane region" description="Helical" evidence="1">
    <location>
        <begin position="140"/>
        <end position="160"/>
    </location>
</feature>
<feature type="transmembrane region" description="Helical" evidence="1">
    <location>
        <begin position="164"/>
        <end position="184"/>
    </location>
</feature>
<feature type="transmembrane region" description="Helical" evidence="1">
    <location>
        <begin position="194"/>
        <end position="214"/>
    </location>
</feature>
<feature type="transmembrane region" description="Helical" evidence="1">
    <location>
        <begin position="246"/>
        <end position="266"/>
    </location>
</feature>
<feature type="transmembrane region" description="Helical" evidence="1">
    <location>
        <begin position="272"/>
        <end position="292"/>
    </location>
</feature>
<reference key="1">
    <citation type="journal article" date="2004" name="J. Bacteriol.">
        <title>Complete genome sequence of Rickettsia typhi and comparison with sequences of other Rickettsiae.</title>
        <authorList>
            <person name="McLeod M.P."/>
            <person name="Qin X."/>
            <person name="Karpathy S.E."/>
            <person name="Gioia J."/>
            <person name="Highlander S.K."/>
            <person name="Fox G.E."/>
            <person name="McNeill T.Z."/>
            <person name="Jiang H."/>
            <person name="Muzny D."/>
            <person name="Jacob L.S."/>
            <person name="Hawes A.C."/>
            <person name="Sodergren E."/>
            <person name="Gill R."/>
            <person name="Hume J."/>
            <person name="Morgan M."/>
            <person name="Fan G."/>
            <person name="Amin A.G."/>
            <person name="Gibbs R.A."/>
            <person name="Hong C."/>
            <person name="Yu X.-J."/>
            <person name="Walker D.H."/>
            <person name="Weinstock G.M."/>
        </authorList>
    </citation>
    <scope>NUCLEOTIDE SEQUENCE [LARGE SCALE GENOMIC DNA]</scope>
    <source>
        <strain>ATCC VR-144 / Wilmington</strain>
    </source>
</reference>
<evidence type="ECO:0000255" key="1">
    <source>
        <dbReference type="HAMAP-Rule" id="MF_01464"/>
    </source>
</evidence>
<name>SECF_RICTY</name>
<dbReference type="EMBL" id="AE017197">
    <property type="protein sequence ID" value="AAU03510.1"/>
    <property type="molecule type" value="Genomic_DNA"/>
</dbReference>
<dbReference type="RefSeq" id="WP_011190497.1">
    <property type="nucleotide sequence ID" value="NC_006142.1"/>
</dbReference>
<dbReference type="SMR" id="Q68XY2"/>
<dbReference type="KEGG" id="rty:RT0022"/>
<dbReference type="eggNOG" id="COG0341">
    <property type="taxonomic scope" value="Bacteria"/>
</dbReference>
<dbReference type="HOGENOM" id="CLU_050012_1_1_5"/>
<dbReference type="OrthoDB" id="9774769at2"/>
<dbReference type="Proteomes" id="UP000000604">
    <property type="component" value="Chromosome"/>
</dbReference>
<dbReference type="GO" id="GO:0005886">
    <property type="term" value="C:plasma membrane"/>
    <property type="evidence" value="ECO:0007669"/>
    <property type="project" value="UniProtKB-SubCell"/>
</dbReference>
<dbReference type="GO" id="GO:0015450">
    <property type="term" value="F:protein-transporting ATPase activity"/>
    <property type="evidence" value="ECO:0007669"/>
    <property type="project" value="InterPro"/>
</dbReference>
<dbReference type="GO" id="GO:0065002">
    <property type="term" value="P:intracellular protein transmembrane transport"/>
    <property type="evidence" value="ECO:0007669"/>
    <property type="project" value="UniProtKB-UniRule"/>
</dbReference>
<dbReference type="GO" id="GO:0006605">
    <property type="term" value="P:protein targeting"/>
    <property type="evidence" value="ECO:0007669"/>
    <property type="project" value="UniProtKB-UniRule"/>
</dbReference>
<dbReference type="GO" id="GO:0043952">
    <property type="term" value="P:protein transport by the Sec complex"/>
    <property type="evidence" value="ECO:0007669"/>
    <property type="project" value="UniProtKB-UniRule"/>
</dbReference>
<dbReference type="Gene3D" id="1.20.1640.10">
    <property type="entry name" value="Multidrug efflux transporter AcrB transmembrane domain"/>
    <property type="match status" value="1"/>
</dbReference>
<dbReference type="HAMAP" id="MF_01464_B">
    <property type="entry name" value="SecF_B"/>
    <property type="match status" value="1"/>
</dbReference>
<dbReference type="InterPro" id="IPR022813">
    <property type="entry name" value="SecD/SecF_arch_bac"/>
</dbReference>
<dbReference type="InterPro" id="IPR022645">
    <property type="entry name" value="SecD/SecF_bac"/>
</dbReference>
<dbReference type="InterPro" id="IPR022646">
    <property type="entry name" value="SecD/SecF_CS"/>
</dbReference>
<dbReference type="InterPro" id="IPR048634">
    <property type="entry name" value="SecD_SecF_C"/>
</dbReference>
<dbReference type="InterPro" id="IPR055344">
    <property type="entry name" value="SecD_SecF_C_bact"/>
</dbReference>
<dbReference type="InterPro" id="IPR005665">
    <property type="entry name" value="SecF_bac"/>
</dbReference>
<dbReference type="NCBIfam" id="TIGR00916">
    <property type="entry name" value="2A0604s01"/>
    <property type="match status" value="1"/>
</dbReference>
<dbReference type="NCBIfam" id="TIGR00966">
    <property type="entry name" value="transloc_SecF"/>
    <property type="match status" value="1"/>
</dbReference>
<dbReference type="PANTHER" id="PTHR30081:SF8">
    <property type="entry name" value="PROTEIN TRANSLOCASE SUBUNIT SECF"/>
    <property type="match status" value="1"/>
</dbReference>
<dbReference type="PANTHER" id="PTHR30081">
    <property type="entry name" value="PROTEIN-EXPORT MEMBRANE PROTEIN SEC"/>
    <property type="match status" value="1"/>
</dbReference>
<dbReference type="Pfam" id="PF07549">
    <property type="entry name" value="Sec_GG"/>
    <property type="match status" value="1"/>
</dbReference>
<dbReference type="Pfam" id="PF02355">
    <property type="entry name" value="SecD_SecF_C"/>
    <property type="match status" value="1"/>
</dbReference>
<dbReference type="PRINTS" id="PR01755">
    <property type="entry name" value="SECFTRNLCASE"/>
</dbReference>
<dbReference type="SUPFAM" id="SSF82866">
    <property type="entry name" value="Multidrug efflux transporter AcrB transmembrane domain"/>
    <property type="match status" value="1"/>
</dbReference>
<sequence>MQIYPLRFVPNKINFDFMNFKKVSYSFSIILSLISLIWIGIYKFNFGIDFVGGIVIEVRLDRAPDLPKMRAVLSALGIGEVVLQNFESEHDLSIRFGSSSEENLMKNIDIIKTSLRNNFPYNFEYRKVDFVGPQVGRHLIEAGAMAMLFSFLAIMVYIGVRFEWYFGFGILIALVHDVILALGFMSITKLDFNLSTIAAVLTIIGYSVNDSVVIYDRIRENLRKYHKKNITEIINLSINETLSRTILTVITTLLANLALILFGGKAIHSFSVLVFFGIIAGTYSSIFISAPILTIFANRKFNKKVIER</sequence>
<organism>
    <name type="scientific">Rickettsia typhi (strain ATCC VR-144 / Wilmington)</name>
    <dbReference type="NCBI Taxonomy" id="257363"/>
    <lineage>
        <taxon>Bacteria</taxon>
        <taxon>Pseudomonadati</taxon>
        <taxon>Pseudomonadota</taxon>
        <taxon>Alphaproteobacteria</taxon>
        <taxon>Rickettsiales</taxon>
        <taxon>Rickettsiaceae</taxon>
        <taxon>Rickettsieae</taxon>
        <taxon>Rickettsia</taxon>
        <taxon>typhus group</taxon>
    </lineage>
</organism>
<accession>Q68XY2</accession>
<keyword id="KW-0997">Cell inner membrane</keyword>
<keyword id="KW-1003">Cell membrane</keyword>
<keyword id="KW-0472">Membrane</keyword>
<keyword id="KW-0653">Protein transport</keyword>
<keyword id="KW-0811">Translocation</keyword>
<keyword id="KW-0812">Transmembrane</keyword>
<keyword id="KW-1133">Transmembrane helix</keyword>
<keyword id="KW-0813">Transport</keyword>
<protein>
    <recommendedName>
        <fullName>Protein translocase subunit SecF</fullName>
    </recommendedName>
</protein>
<comment type="function">
    <text evidence="1">Part of the Sec protein translocase complex. Interacts with the SecYEG preprotein conducting channel. SecDF uses the proton motive force (PMF) to complete protein translocation after the ATP-dependent function of SecA.</text>
</comment>
<comment type="subunit">
    <text evidence="1">Forms a complex with SecD. Part of the essential Sec protein translocation apparatus which comprises SecA, SecYEG and auxiliary proteins SecDF-YajC and YidC.</text>
</comment>
<comment type="subcellular location">
    <subcellularLocation>
        <location evidence="1">Cell inner membrane</location>
        <topology evidence="1">Multi-pass membrane protein</topology>
    </subcellularLocation>
</comment>
<comment type="similarity">
    <text evidence="1">Belongs to the SecD/SecF family. SecF subfamily.</text>
</comment>